<reference key="1">
    <citation type="journal article" date="2003" name="J. Bacteriol.">
        <title>Mgr, a novel global regulator in Staphylococcus aureus.</title>
        <authorList>
            <person name="Luong T.T."/>
            <person name="Newell S.W."/>
            <person name="Lee C.Y."/>
        </authorList>
    </citation>
    <scope>NUCLEOTIDE SEQUENCE [GENOMIC DNA]</scope>
    <scope>FUNCTION</scope>
    <source>
        <strain>Becker</strain>
    </source>
</reference>
<protein>
    <recommendedName>
        <fullName>HTH-type transcriptional regulator MgrA</fullName>
    </recommendedName>
    <alternativeName>
        <fullName>Regulator of autolytic activity</fullName>
    </alternativeName>
</protein>
<gene>
    <name type="primary">mgrA</name>
    <name type="synonym">mgr</name>
</gene>
<keyword id="KW-0002">3D-structure</keyword>
<keyword id="KW-0010">Activator</keyword>
<keyword id="KW-0963">Cytoplasm</keyword>
<keyword id="KW-0238">DNA-binding</keyword>
<keyword id="KW-0678">Repressor</keyword>
<keyword id="KW-0804">Transcription</keyword>
<keyword id="KW-0805">Transcription regulation</keyword>
<keyword id="KW-0843">Virulence</keyword>
<accession>P0C1S0</accession>
<accession>Q7X448</accession>
<accession>Q83ZI4</accession>
<name>MGRA_STAAU</name>
<feature type="initiator methionine" description="Removed" evidence="1">
    <location>
        <position position="1"/>
    </location>
</feature>
<feature type="chain" id="PRO_0000054366" description="HTH-type transcriptional regulator MgrA">
    <location>
        <begin position="2"/>
        <end position="147"/>
    </location>
</feature>
<feature type="domain" description="HTH marR-type" evidence="2">
    <location>
        <begin position="8"/>
        <end position="139"/>
    </location>
</feature>
<feature type="DNA-binding region" description="H-T-H motif" evidence="2">
    <location>
        <begin position="55"/>
        <end position="78"/>
    </location>
</feature>
<feature type="helix" evidence="5">
    <location>
        <begin position="11"/>
        <end position="29"/>
    </location>
</feature>
<feature type="helix" evidence="5">
    <location>
        <begin position="31"/>
        <end position="34"/>
    </location>
</feature>
<feature type="helix" evidence="5">
    <location>
        <begin position="38"/>
        <end position="49"/>
    </location>
</feature>
<feature type="strand" evidence="5">
    <location>
        <begin position="50"/>
        <end position="54"/>
    </location>
</feature>
<feature type="helix" evidence="5">
    <location>
        <begin position="55"/>
        <end position="61"/>
    </location>
</feature>
<feature type="turn" evidence="5">
    <location>
        <begin position="66"/>
        <end position="68"/>
    </location>
</feature>
<feature type="helix" evidence="5">
    <location>
        <begin position="69"/>
        <end position="78"/>
    </location>
</feature>
<feature type="strand" evidence="5">
    <location>
        <begin position="81"/>
        <end position="86"/>
    </location>
</feature>
<feature type="strand" evidence="5">
    <location>
        <begin position="88"/>
        <end position="90"/>
    </location>
</feature>
<feature type="strand" evidence="5">
    <location>
        <begin position="94"/>
        <end position="98"/>
    </location>
</feature>
<feature type="helix" evidence="5">
    <location>
        <begin position="100"/>
        <end position="109"/>
    </location>
</feature>
<feature type="helix" evidence="5">
    <location>
        <begin position="112"/>
        <end position="119"/>
    </location>
</feature>
<feature type="helix" evidence="5">
    <location>
        <begin position="124"/>
        <end position="138"/>
    </location>
</feature>
<sequence>MSDQHNLKEQLCFSLYNAQRQVNRYYSNKVFKKYNLTYPQFLVLTILWDESPVNVKKVVTELALDTGTVSPLLKRMEQVDLIKRERSEVDQREVFIHLTDKSETIRPELSNASDKVASASSLSQDEVKELNRLLGKVIHAFDETKEK</sequence>
<proteinExistence type="evidence at protein level"/>
<evidence type="ECO:0000250" key="1"/>
<evidence type="ECO:0000255" key="2">
    <source>
        <dbReference type="PROSITE-ProRule" id="PRU00345"/>
    </source>
</evidence>
<evidence type="ECO:0000269" key="3">
    <source>
    </source>
</evidence>
<evidence type="ECO:0000305" key="4"/>
<evidence type="ECO:0007829" key="5">
    <source>
        <dbReference type="PDB" id="2BV6"/>
    </source>
</evidence>
<comment type="function">
    <text evidence="1 3">Regulatory protein involved in autolytic activity, multidrug resistance and virulence (By similarity). Negatively controls spa (surface protein A) transcription. Activates type 8 capsular polysaccharide (cap8) and nuclease (nuc) biosynthesis. Represses coagulase and protease production.</text>
</comment>
<comment type="subcellular location">
    <subcellularLocation>
        <location evidence="4">Cytoplasm</location>
    </subcellularLocation>
</comment>
<comment type="miscellaneous">
    <text>In strain Becker, gene disruption may lead to increase in alpha-hemolysin (hla).</text>
</comment>
<dbReference type="EMBL" id="AY293568">
    <property type="protein sequence ID" value="AAP48794.1"/>
    <property type="molecule type" value="Genomic_DNA"/>
</dbReference>
<dbReference type="RefSeq" id="WP_001283444.1">
    <property type="nucleotide sequence ID" value="NZ_WYDB01000004.1"/>
</dbReference>
<dbReference type="PDB" id="2BV6">
    <property type="method" value="X-ray"/>
    <property type="resolution" value="2.80 A"/>
    <property type="chains" value="A=6-143"/>
</dbReference>
<dbReference type="PDBsum" id="2BV6"/>
<dbReference type="SMR" id="P0C1S0"/>
<dbReference type="BindingDB" id="P0C1S0"/>
<dbReference type="ChEMBL" id="CHEMBL2331056"/>
<dbReference type="GeneID" id="98345028"/>
<dbReference type="OMA" id="AHRMTKS"/>
<dbReference type="OrthoDB" id="9806864at2"/>
<dbReference type="EvolutionaryTrace" id="P0C1S0"/>
<dbReference type="PHI-base" id="PHI:3058"/>
<dbReference type="PHI-base" id="PHI:6255"/>
<dbReference type="PRO" id="PR:P0C1S0"/>
<dbReference type="GO" id="GO:0005737">
    <property type="term" value="C:cytoplasm"/>
    <property type="evidence" value="ECO:0007669"/>
    <property type="project" value="UniProtKB-SubCell"/>
</dbReference>
<dbReference type="GO" id="GO:0003677">
    <property type="term" value="F:DNA binding"/>
    <property type="evidence" value="ECO:0007669"/>
    <property type="project" value="UniProtKB-KW"/>
</dbReference>
<dbReference type="GO" id="GO:0003700">
    <property type="term" value="F:DNA-binding transcription factor activity"/>
    <property type="evidence" value="ECO:0007669"/>
    <property type="project" value="InterPro"/>
</dbReference>
<dbReference type="GO" id="GO:0006950">
    <property type="term" value="P:response to stress"/>
    <property type="evidence" value="ECO:0007669"/>
    <property type="project" value="TreeGrafter"/>
</dbReference>
<dbReference type="FunFam" id="1.10.10.10:FF:000163">
    <property type="entry name" value="MarR family transcriptional regulator"/>
    <property type="match status" value="1"/>
</dbReference>
<dbReference type="Gene3D" id="1.10.10.10">
    <property type="entry name" value="Winged helix-like DNA-binding domain superfamily/Winged helix DNA-binding domain"/>
    <property type="match status" value="1"/>
</dbReference>
<dbReference type="InterPro" id="IPR000835">
    <property type="entry name" value="HTH_MarR-typ"/>
</dbReference>
<dbReference type="InterPro" id="IPR039422">
    <property type="entry name" value="MarR/SlyA-like"/>
</dbReference>
<dbReference type="InterPro" id="IPR055166">
    <property type="entry name" value="Transc_reg_Sar_Rot_HTH"/>
</dbReference>
<dbReference type="InterPro" id="IPR023187">
    <property type="entry name" value="Tscrpt_reg_MarR-type_CS"/>
</dbReference>
<dbReference type="InterPro" id="IPR036388">
    <property type="entry name" value="WH-like_DNA-bd_sf"/>
</dbReference>
<dbReference type="InterPro" id="IPR036390">
    <property type="entry name" value="WH_DNA-bd_sf"/>
</dbReference>
<dbReference type="PANTHER" id="PTHR33164:SF5">
    <property type="entry name" value="ORGANIC HYDROPEROXIDE RESISTANCE TRANSCRIPTIONAL REGULATOR"/>
    <property type="match status" value="1"/>
</dbReference>
<dbReference type="PANTHER" id="PTHR33164">
    <property type="entry name" value="TRANSCRIPTIONAL REGULATOR, MARR FAMILY"/>
    <property type="match status" value="1"/>
</dbReference>
<dbReference type="Pfam" id="PF22381">
    <property type="entry name" value="Staph_reg_Sar_Rot"/>
    <property type="match status" value="1"/>
</dbReference>
<dbReference type="SMART" id="SM00347">
    <property type="entry name" value="HTH_MARR"/>
    <property type="match status" value="1"/>
</dbReference>
<dbReference type="SUPFAM" id="SSF46785">
    <property type="entry name" value="Winged helix' DNA-binding domain"/>
    <property type="match status" value="1"/>
</dbReference>
<dbReference type="PROSITE" id="PS01117">
    <property type="entry name" value="HTH_MARR_1"/>
    <property type="match status" value="1"/>
</dbReference>
<dbReference type="PROSITE" id="PS50995">
    <property type="entry name" value="HTH_MARR_2"/>
    <property type="match status" value="1"/>
</dbReference>
<organism>
    <name type="scientific">Staphylococcus aureus</name>
    <dbReference type="NCBI Taxonomy" id="1280"/>
    <lineage>
        <taxon>Bacteria</taxon>
        <taxon>Bacillati</taxon>
        <taxon>Bacillota</taxon>
        <taxon>Bacilli</taxon>
        <taxon>Bacillales</taxon>
        <taxon>Staphylococcaceae</taxon>
        <taxon>Staphylococcus</taxon>
    </lineage>
</organism>